<sequence length="131" mass="15017">MTRSKIRENVFKMLFRVEFHDKSELAEQMELLNDELTNPTDEERQYIDEKCSAIIEHMAELDALIDEKSTGWKTNRMAKVDLAIIRLAVYEIKFEDDIPTKVSINEAVELAKKYGADESGAFVNGVLAKFA</sequence>
<gene>
    <name evidence="1" type="primary">nusB</name>
    <name type="ordered locus">EUBREC_2213</name>
</gene>
<name>NUSB_AGARV</name>
<organism>
    <name type="scientific">Agathobacter rectalis (strain ATCC 33656 / DSM 3377 / JCM 17463 / KCTC 5835 / VPI 0990)</name>
    <name type="common">Eubacterium rectale</name>
    <dbReference type="NCBI Taxonomy" id="515619"/>
    <lineage>
        <taxon>Bacteria</taxon>
        <taxon>Bacillati</taxon>
        <taxon>Bacillota</taxon>
        <taxon>Clostridia</taxon>
        <taxon>Lachnospirales</taxon>
        <taxon>Lachnospiraceae</taxon>
        <taxon>Agathobacter</taxon>
    </lineage>
</organism>
<comment type="function">
    <text evidence="1">Involved in transcription antitermination. Required for transcription of ribosomal RNA (rRNA) genes. Binds specifically to the boxA antiterminator sequence of the ribosomal RNA (rrn) operons.</text>
</comment>
<comment type="similarity">
    <text evidence="1">Belongs to the NusB family.</text>
</comment>
<reference key="1">
    <citation type="journal article" date="2009" name="Proc. Natl. Acad. Sci. U.S.A.">
        <title>Characterizing a model human gut microbiota composed of members of its two dominant bacterial phyla.</title>
        <authorList>
            <person name="Mahowald M.A."/>
            <person name="Rey F.E."/>
            <person name="Seedorf H."/>
            <person name="Turnbaugh P.J."/>
            <person name="Fulton R.S."/>
            <person name="Wollam A."/>
            <person name="Shah N."/>
            <person name="Wang C."/>
            <person name="Magrini V."/>
            <person name="Wilson R.K."/>
            <person name="Cantarel B.L."/>
            <person name="Coutinho P.M."/>
            <person name="Henrissat B."/>
            <person name="Crock L.W."/>
            <person name="Russell A."/>
            <person name="Verberkmoes N.C."/>
            <person name="Hettich R.L."/>
            <person name="Gordon J.I."/>
        </authorList>
    </citation>
    <scope>NUCLEOTIDE SEQUENCE [LARGE SCALE GENOMIC DNA]</scope>
    <source>
        <strain>ATCC 33656 / DSM 3377 / JCM 17463 / KCTC 5835 / LMG 30912 / VPI 0990</strain>
    </source>
</reference>
<dbReference type="EMBL" id="CP001107">
    <property type="protein sequence ID" value="ACR75953.1"/>
    <property type="molecule type" value="Genomic_DNA"/>
</dbReference>
<dbReference type="RefSeq" id="WP_012743048.1">
    <property type="nucleotide sequence ID" value="NZ_CAXSYD010000004.1"/>
</dbReference>
<dbReference type="SMR" id="C4ZCZ0"/>
<dbReference type="STRING" id="515619.EUBREC_2213"/>
<dbReference type="PaxDb" id="515619-EUBREC_2213"/>
<dbReference type="GeneID" id="86988989"/>
<dbReference type="KEGG" id="ere:EUBREC_2213"/>
<dbReference type="HOGENOM" id="CLU_087843_3_1_9"/>
<dbReference type="Proteomes" id="UP000001477">
    <property type="component" value="Chromosome"/>
</dbReference>
<dbReference type="GO" id="GO:0005829">
    <property type="term" value="C:cytosol"/>
    <property type="evidence" value="ECO:0007669"/>
    <property type="project" value="TreeGrafter"/>
</dbReference>
<dbReference type="GO" id="GO:0003723">
    <property type="term" value="F:RNA binding"/>
    <property type="evidence" value="ECO:0007669"/>
    <property type="project" value="UniProtKB-UniRule"/>
</dbReference>
<dbReference type="GO" id="GO:0006353">
    <property type="term" value="P:DNA-templated transcription termination"/>
    <property type="evidence" value="ECO:0007669"/>
    <property type="project" value="UniProtKB-UniRule"/>
</dbReference>
<dbReference type="GO" id="GO:0031564">
    <property type="term" value="P:transcription antitermination"/>
    <property type="evidence" value="ECO:0007669"/>
    <property type="project" value="UniProtKB-KW"/>
</dbReference>
<dbReference type="Gene3D" id="1.10.940.10">
    <property type="entry name" value="NusB-like"/>
    <property type="match status" value="1"/>
</dbReference>
<dbReference type="HAMAP" id="MF_00073">
    <property type="entry name" value="NusB"/>
    <property type="match status" value="1"/>
</dbReference>
<dbReference type="InterPro" id="IPR035926">
    <property type="entry name" value="NusB-like_sf"/>
</dbReference>
<dbReference type="InterPro" id="IPR011605">
    <property type="entry name" value="NusB_fam"/>
</dbReference>
<dbReference type="InterPro" id="IPR006027">
    <property type="entry name" value="NusB_RsmB_TIM44"/>
</dbReference>
<dbReference type="NCBIfam" id="TIGR01951">
    <property type="entry name" value="nusB"/>
    <property type="match status" value="1"/>
</dbReference>
<dbReference type="PANTHER" id="PTHR11078:SF3">
    <property type="entry name" value="ANTITERMINATION NUSB DOMAIN-CONTAINING PROTEIN"/>
    <property type="match status" value="1"/>
</dbReference>
<dbReference type="PANTHER" id="PTHR11078">
    <property type="entry name" value="N UTILIZATION SUBSTANCE PROTEIN B-RELATED"/>
    <property type="match status" value="1"/>
</dbReference>
<dbReference type="Pfam" id="PF01029">
    <property type="entry name" value="NusB"/>
    <property type="match status" value="1"/>
</dbReference>
<dbReference type="SUPFAM" id="SSF48013">
    <property type="entry name" value="NusB-like"/>
    <property type="match status" value="1"/>
</dbReference>
<protein>
    <recommendedName>
        <fullName evidence="1">Transcription antitermination protein NusB</fullName>
    </recommendedName>
    <alternativeName>
        <fullName evidence="1">Antitermination factor NusB</fullName>
    </alternativeName>
</protein>
<feature type="chain" id="PRO_1000202479" description="Transcription antitermination protein NusB">
    <location>
        <begin position="1"/>
        <end position="131"/>
    </location>
</feature>
<accession>C4ZCZ0</accession>
<evidence type="ECO:0000255" key="1">
    <source>
        <dbReference type="HAMAP-Rule" id="MF_00073"/>
    </source>
</evidence>
<keyword id="KW-0694">RNA-binding</keyword>
<keyword id="KW-0804">Transcription</keyword>
<keyword id="KW-0889">Transcription antitermination</keyword>
<keyword id="KW-0805">Transcription regulation</keyword>
<proteinExistence type="inferred from homology"/>